<name>MUKE_ACTSZ</name>
<keyword id="KW-0131">Cell cycle</keyword>
<keyword id="KW-0132">Cell division</keyword>
<keyword id="KW-0159">Chromosome partition</keyword>
<keyword id="KW-0963">Cytoplasm</keyword>
<keyword id="KW-0226">DNA condensation</keyword>
<keyword id="KW-1185">Reference proteome</keyword>
<feature type="chain" id="PRO_1000073659" description="Chromosome partition protein MukE">
    <location>
        <begin position="1"/>
        <end position="245"/>
    </location>
</feature>
<feature type="region of interest" description="Disordered" evidence="2">
    <location>
        <begin position="213"/>
        <end position="245"/>
    </location>
</feature>
<feature type="compositionally biased region" description="Acidic residues" evidence="2">
    <location>
        <begin position="224"/>
        <end position="245"/>
    </location>
</feature>
<sequence>MNENLQDLISTKLAAAIANPLFPAVDSQLRSGRHIGQEHLDNYAFLADFQNELDGFYRRYNVELIRAPEGFFYLRPKATTLIARSVLSELEMLVGKVLCYLYLSPERLAQQGIFTVQEVYDELLNLADEAKLLKAVNLRASGSDLDKQKLAEKVRAALGRLRRLGMLYTVGEQNSGKFTISESVFRFGAEVRAGDDPIEAQLRLIRDGEAATPESIAAEKATADDESAVSNEEDFEYDDNQEGAE</sequence>
<proteinExistence type="inferred from homology"/>
<comment type="function">
    <text evidence="1">Involved in chromosome condensation, segregation and cell cycle progression. May participate in facilitating chromosome segregation by condensation DNA from both sides of a centrally located replisome during cell division. Probably acts via its interaction with MukB and MukF.</text>
</comment>
<comment type="subunit">
    <text evidence="1">Interacts, and probably forms a ternary complex, with MukF and MukB. The complex formation is stimulated by calcium or magnesium.</text>
</comment>
<comment type="subcellular location">
    <subcellularLocation>
        <location evidence="1">Cytoplasm</location>
        <location evidence="1">Nucleoid</location>
    </subcellularLocation>
    <text evidence="1">Restricted to the nucleoid region.</text>
</comment>
<comment type="similarity">
    <text evidence="1">Belongs to the MukE family.</text>
</comment>
<protein>
    <recommendedName>
        <fullName evidence="1">Chromosome partition protein MukE</fullName>
    </recommendedName>
</protein>
<organism>
    <name type="scientific">Actinobacillus succinogenes (strain ATCC 55618 / DSM 22257 / CCUG 43843 / 130Z)</name>
    <dbReference type="NCBI Taxonomy" id="339671"/>
    <lineage>
        <taxon>Bacteria</taxon>
        <taxon>Pseudomonadati</taxon>
        <taxon>Pseudomonadota</taxon>
        <taxon>Gammaproteobacteria</taxon>
        <taxon>Pasteurellales</taxon>
        <taxon>Pasteurellaceae</taxon>
        <taxon>Actinobacillus</taxon>
    </lineage>
</organism>
<evidence type="ECO:0000255" key="1">
    <source>
        <dbReference type="HAMAP-Rule" id="MF_01802"/>
    </source>
</evidence>
<evidence type="ECO:0000256" key="2">
    <source>
        <dbReference type="SAM" id="MobiDB-lite"/>
    </source>
</evidence>
<reference key="1">
    <citation type="journal article" date="2010" name="BMC Genomics">
        <title>A genomic perspective on the potential of Actinobacillus succinogenes for industrial succinate production.</title>
        <authorList>
            <person name="McKinlay J.B."/>
            <person name="Laivenieks M."/>
            <person name="Schindler B.D."/>
            <person name="McKinlay A.A."/>
            <person name="Siddaramappa S."/>
            <person name="Challacombe J.F."/>
            <person name="Lowry S.R."/>
            <person name="Clum A."/>
            <person name="Lapidus A.L."/>
            <person name="Burkhart K.B."/>
            <person name="Harkins V."/>
            <person name="Vieille C."/>
        </authorList>
    </citation>
    <scope>NUCLEOTIDE SEQUENCE [LARGE SCALE GENOMIC DNA]</scope>
    <source>
        <strain>ATCC 55618 / DSM 22257 / CCUG 43843 / 130Z</strain>
    </source>
</reference>
<dbReference type="EMBL" id="CP000746">
    <property type="protein sequence ID" value="ABR74763.1"/>
    <property type="molecule type" value="Genomic_DNA"/>
</dbReference>
<dbReference type="RefSeq" id="WP_012073140.1">
    <property type="nucleotide sequence ID" value="NC_009655.1"/>
</dbReference>
<dbReference type="SMR" id="A6VP66"/>
<dbReference type="STRING" id="339671.Asuc_1404"/>
<dbReference type="KEGG" id="asu:Asuc_1404"/>
<dbReference type="eggNOG" id="COG3095">
    <property type="taxonomic scope" value="Bacteria"/>
</dbReference>
<dbReference type="HOGENOM" id="CLU_1146408_0_0_6"/>
<dbReference type="OrthoDB" id="6196648at2"/>
<dbReference type="Proteomes" id="UP000001114">
    <property type="component" value="Chromosome"/>
</dbReference>
<dbReference type="GO" id="GO:0005737">
    <property type="term" value="C:cytoplasm"/>
    <property type="evidence" value="ECO:0007669"/>
    <property type="project" value="UniProtKB-UniRule"/>
</dbReference>
<dbReference type="GO" id="GO:0009295">
    <property type="term" value="C:nucleoid"/>
    <property type="evidence" value="ECO:0007669"/>
    <property type="project" value="UniProtKB-SubCell"/>
</dbReference>
<dbReference type="GO" id="GO:0051301">
    <property type="term" value="P:cell division"/>
    <property type="evidence" value="ECO:0007669"/>
    <property type="project" value="UniProtKB-KW"/>
</dbReference>
<dbReference type="GO" id="GO:0030261">
    <property type="term" value="P:chromosome condensation"/>
    <property type="evidence" value="ECO:0007669"/>
    <property type="project" value="UniProtKB-KW"/>
</dbReference>
<dbReference type="GO" id="GO:0007059">
    <property type="term" value="P:chromosome segregation"/>
    <property type="evidence" value="ECO:0007669"/>
    <property type="project" value="UniProtKB-UniRule"/>
</dbReference>
<dbReference type="GO" id="GO:0006260">
    <property type="term" value="P:DNA replication"/>
    <property type="evidence" value="ECO:0007669"/>
    <property type="project" value="UniProtKB-UniRule"/>
</dbReference>
<dbReference type="Gene3D" id="1.10.10.2250">
    <property type="match status" value="1"/>
</dbReference>
<dbReference type="Gene3D" id="1.10.10.2260">
    <property type="entry name" value="MukE-like family, C-terminal domain"/>
    <property type="match status" value="1"/>
</dbReference>
<dbReference type="HAMAP" id="MF_01802">
    <property type="entry name" value="MukE"/>
    <property type="match status" value="1"/>
</dbReference>
<dbReference type="InterPro" id="IPR042037">
    <property type="entry name" value="MukE_C"/>
</dbReference>
<dbReference type="InterPro" id="IPR042038">
    <property type="entry name" value="MukE_N"/>
</dbReference>
<dbReference type="InterPro" id="IPR007385">
    <property type="entry name" value="Scp_MukE"/>
</dbReference>
<dbReference type="NCBIfam" id="NF003602">
    <property type="entry name" value="PRK05256.1"/>
    <property type="match status" value="1"/>
</dbReference>
<dbReference type="Pfam" id="PF04288">
    <property type="entry name" value="MukE"/>
    <property type="match status" value="1"/>
</dbReference>
<accession>A6VP66</accession>
<gene>
    <name evidence="1" type="primary">mukE</name>
    <name type="ordered locus">Asuc_1404</name>
</gene>